<name>NKX21_MOUSE</name>
<reference key="1">
    <citation type="journal article" date="1995" name="Biochim. Biophys. Acta">
        <title>The complete nucleotide sequence of the mouse thyroid-specific enhancer-binding protein (T/EBP) gene: extensive identity of the deduced amino acid sequence with the human protein.</title>
        <authorList>
            <person name="Oguchi H."/>
            <person name="Pan Y.-T."/>
            <person name="Kimura S."/>
        </authorList>
    </citation>
    <scope>NUCLEOTIDE SEQUENCE [GENOMIC DNA]</scope>
    <source>
        <strain>129/Sv</strain>
        <tissue>Liver</tissue>
    </source>
</reference>
<reference key="2">
    <citation type="journal article" date="2004" name="Genome Res.">
        <title>The status, quality, and expansion of the NIH full-length cDNA project: the Mammalian Gene Collection (MGC).</title>
        <authorList>
            <consortium name="The MGC Project Team"/>
        </authorList>
    </citation>
    <scope>NUCLEOTIDE SEQUENCE [LARGE SCALE MRNA]</scope>
    <source>
        <strain>C57BL/6J</strain>
        <tissue>Brain</tissue>
    </source>
</reference>
<reference key="3">
    <citation type="journal article" date="2012" name="J. Biol. Chem.">
        <title>The transcription factors Grainyhead-like 2 and NK2-homeobox 1 form a regulatory loop that coordinates lung epithelial cell morphogenesis and differentiation.</title>
        <authorList>
            <person name="Varma S."/>
            <person name="Cao Y."/>
            <person name="Tagne J.B."/>
            <person name="Lakshminarayanan M."/>
            <person name="Li J."/>
            <person name="Friedman T.B."/>
            <person name="Morell R.J."/>
            <person name="Warburton D."/>
            <person name="Kotton D.N."/>
            <person name="Ramirez M.I."/>
        </authorList>
    </citation>
    <scope>FUNCTION</scope>
    <scope>SUBCELLULAR LOCATION</scope>
    <scope>DEVELOPMENTAL STAGE</scope>
</reference>
<reference key="4">
    <citation type="journal article" date="2012" name="J. Neuroendocrinol.">
        <title>Thyroid transcription factor 1, a homeodomain containing transcription factor, contributes to regulating periodic oscillations in GnRH gene expression.</title>
        <authorList>
            <person name="Matagne V."/>
            <person name="Kim J.G."/>
            <person name="Ryu B.J."/>
            <person name="Hur M.K."/>
            <person name="Kim M.S."/>
            <person name="Kim K."/>
            <person name="Park B.S."/>
            <person name="Damante G."/>
            <person name="Smiley G."/>
            <person name="Lee B.J."/>
            <person name="Ojeda S.R."/>
        </authorList>
    </citation>
    <scope>FUNCTION</scope>
</reference>
<organism>
    <name type="scientific">Mus musculus</name>
    <name type="common">Mouse</name>
    <dbReference type="NCBI Taxonomy" id="10090"/>
    <lineage>
        <taxon>Eukaryota</taxon>
        <taxon>Metazoa</taxon>
        <taxon>Chordata</taxon>
        <taxon>Craniata</taxon>
        <taxon>Vertebrata</taxon>
        <taxon>Euteleostomi</taxon>
        <taxon>Mammalia</taxon>
        <taxon>Eutheria</taxon>
        <taxon>Euarchontoglires</taxon>
        <taxon>Glires</taxon>
        <taxon>Rodentia</taxon>
        <taxon>Myomorpha</taxon>
        <taxon>Muroidea</taxon>
        <taxon>Muridae</taxon>
        <taxon>Murinae</taxon>
        <taxon>Mus</taxon>
        <taxon>Mus</taxon>
    </lineage>
</organism>
<proteinExistence type="evidence at transcript level"/>
<evidence type="ECO:0000250" key="1"/>
<evidence type="ECO:0000250" key="2">
    <source>
        <dbReference type="UniProtKB" id="P23441"/>
    </source>
</evidence>
<evidence type="ECO:0000250" key="3">
    <source>
        <dbReference type="UniProtKB" id="P43699"/>
    </source>
</evidence>
<evidence type="ECO:0000255" key="4">
    <source>
        <dbReference type="PROSITE-ProRule" id="PRU00108"/>
    </source>
</evidence>
<evidence type="ECO:0000256" key="5">
    <source>
        <dbReference type="SAM" id="MobiDB-lite"/>
    </source>
</evidence>
<evidence type="ECO:0000269" key="6">
    <source>
    </source>
</evidence>
<evidence type="ECO:0000269" key="7">
    <source>
    </source>
</evidence>
<evidence type="ECO:0000305" key="8"/>
<evidence type="ECO:0000312" key="9">
    <source>
        <dbReference type="MGI" id="MGI:108067"/>
    </source>
</evidence>
<dbReference type="EMBL" id="U19755">
    <property type="protein sequence ID" value="AAA86100.1"/>
    <property type="molecule type" value="Genomic_DNA"/>
</dbReference>
<dbReference type="EMBL" id="BC080868">
    <property type="protein sequence ID" value="AAH80868.1"/>
    <property type="molecule type" value="mRNA"/>
</dbReference>
<dbReference type="CCDS" id="CCDS25922.1"/>
<dbReference type="PIR" id="S53724">
    <property type="entry name" value="S53724"/>
</dbReference>
<dbReference type="RefSeq" id="NP_033411.3">
    <property type="nucleotide sequence ID" value="NM_009385.3"/>
</dbReference>
<dbReference type="BMRB" id="P50220"/>
<dbReference type="SMR" id="P50220"/>
<dbReference type="BioGRID" id="204207">
    <property type="interactions" value="12"/>
</dbReference>
<dbReference type="FunCoup" id="P50220">
    <property type="interactions" value="870"/>
</dbReference>
<dbReference type="IntAct" id="P50220">
    <property type="interactions" value="9"/>
</dbReference>
<dbReference type="STRING" id="10090.ENSMUSP00000001536"/>
<dbReference type="GlyGen" id="P50220">
    <property type="glycosylation" value="1 site"/>
</dbReference>
<dbReference type="iPTMnet" id="P50220"/>
<dbReference type="PhosphoSitePlus" id="P50220"/>
<dbReference type="PaxDb" id="10090-ENSMUSP00000001536"/>
<dbReference type="ProteomicsDB" id="287428"/>
<dbReference type="Antibodypedia" id="3519">
    <property type="antibodies" value="1187 antibodies from 47 providers"/>
</dbReference>
<dbReference type="DNASU" id="21869"/>
<dbReference type="Ensembl" id="ENSMUST00000001536.9">
    <property type="protein sequence ID" value="ENSMUSP00000001536.8"/>
    <property type="gene ID" value="ENSMUSG00000001496.16"/>
</dbReference>
<dbReference type="Ensembl" id="ENSMUST00000178477.9">
    <property type="protein sequence ID" value="ENSMUSP00000136103.2"/>
    <property type="gene ID" value="ENSMUSG00000001496.16"/>
</dbReference>
<dbReference type="GeneID" id="21869"/>
<dbReference type="KEGG" id="mmu:21869"/>
<dbReference type="UCSC" id="uc007npf.3">
    <property type="organism name" value="mouse"/>
</dbReference>
<dbReference type="AGR" id="MGI:108067"/>
<dbReference type="CTD" id="7080"/>
<dbReference type="MGI" id="MGI:108067">
    <property type="gene designation" value="Nkx2-1"/>
</dbReference>
<dbReference type="VEuPathDB" id="HostDB:ENSMUSG00000001496"/>
<dbReference type="eggNOG" id="KOG0842">
    <property type="taxonomic scope" value="Eukaryota"/>
</dbReference>
<dbReference type="GeneTree" id="ENSGT00940000161107"/>
<dbReference type="HOGENOM" id="CLU_052416_0_0_1"/>
<dbReference type="InParanoid" id="P50220"/>
<dbReference type="OMA" id="PPYQETM"/>
<dbReference type="OrthoDB" id="3137333at2759"/>
<dbReference type="PhylomeDB" id="P50220"/>
<dbReference type="TreeFam" id="TF351204"/>
<dbReference type="BioGRID-ORCS" id="21869">
    <property type="hits" value="1 hit in 81 CRISPR screens"/>
</dbReference>
<dbReference type="ChiTaRS" id="Nkx2-1">
    <property type="organism name" value="mouse"/>
</dbReference>
<dbReference type="PRO" id="PR:P50220"/>
<dbReference type="Proteomes" id="UP000000589">
    <property type="component" value="Chromosome 12"/>
</dbReference>
<dbReference type="RNAct" id="P50220">
    <property type="molecule type" value="protein"/>
</dbReference>
<dbReference type="Bgee" id="ENSMUSG00000001496">
    <property type="expression patterns" value="Expressed in future forebrain and 84 other cell types or tissues"/>
</dbReference>
<dbReference type="GO" id="GO:0005654">
    <property type="term" value="C:nucleoplasm"/>
    <property type="evidence" value="ECO:0000250"/>
    <property type="project" value="UniProtKB"/>
</dbReference>
<dbReference type="GO" id="GO:0005634">
    <property type="term" value="C:nucleus"/>
    <property type="evidence" value="ECO:0000314"/>
    <property type="project" value="UniProtKB"/>
</dbReference>
<dbReference type="GO" id="GO:0005667">
    <property type="term" value="C:transcription regulator complex"/>
    <property type="evidence" value="ECO:0000314"/>
    <property type="project" value="MGI"/>
</dbReference>
<dbReference type="GO" id="GO:0003677">
    <property type="term" value="F:DNA binding"/>
    <property type="evidence" value="ECO:0000266"/>
    <property type="project" value="MGI"/>
</dbReference>
<dbReference type="GO" id="GO:0003700">
    <property type="term" value="F:DNA-binding transcription factor activity"/>
    <property type="evidence" value="ECO:0000314"/>
    <property type="project" value="UniProtKB"/>
</dbReference>
<dbReference type="GO" id="GO:0000981">
    <property type="term" value="F:DNA-binding transcription factor activity, RNA polymerase II-specific"/>
    <property type="evidence" value="ECO:0000314"/>
    <property type="project" value="MGI"/>
</dbReference>
<dbReference type="GO" id="GO:0019899">
    <property type="term" value="F:enzyme binding"/>
    <property type="evidence" value="ECO:0007669"/>
    <property type="project" value="Ensembl"/>
</dbReference>
<dbReference type="GO" id="GO:0001161">
    <property type="term" value="F:intronic transcription regulatory region sequence-specific DNA binding"/>
    <property type="evidence" value="ECO:0000314"/>
    <property type="project" value="UniProtKB"/>
</dbReference>
<dbReference type="GO" id="GO:0000978">
    <property type="term" value="F:RNA polymerase II cis-regulatory region sequence-specific DNA binding"/>
    <property type="evidence" value="ECO:0000314"/>
    <property type="project" value="UniProtKB"/>
</dbReference>
<dbReference type="GO" id="GO:0000977">
    <property type="term" value="F:RNA polymerase II transcription regulatory region sequence-specific DNA binding"/>
    <property type="evidence" value="ECO:0000314"/>
    <property type="project" value="MGI"/>
</dbReference>
<dbReference type="GO" id="GO:0061629">
    <property type="term" value="F:RNA polymerase II-specific DNA-binding transcription factor binding"/>
    <property type="evidence" value="ECO:0007669"/>
    <property type="project" value="Ensembl"/>
</dbReference>
<dbReference type="GO" id="GO:0043565">
    <property type="term" value="F:sequence-specific DNA binding"/>
    <property type="evidence" value="ECO:0000314"/>
    <property type="project" value="MGI"/>
</dbReference>
<dbReference type="GO" id="GO:0000976">
    <property type="term" value="F:transcription cis-regulatory region binding"/>
    <property type="evidence" value="ECO:0000314"/>
    <property type="project" value="MGI"/>
</dbReference>
<dbReference type="GO" id="GO:0048646">
    <property type="term" value="P:anatomical structure formation involved in morphogenesis"/>
    <property type="evidence" value="ECO:0000315"/>
    <property type="project" value="MGI"/>
</dbReference>
<dbReference type="GO" id="GO:0009887">
    <property type="term" value="P:animal organ morphogenesis"/>
    <property type="evidence" value="ECO:0000315"/>
    <property type="project" value="MGI"/>
</dbReference>
<dbReference type="GO" id="GO:0007411">
    <property type="term" value="P:axon guidance"/>
    <property type="evidence" value="ECO:0000315"/>
    <property type="project" value="MGI"/>
</dbReference>
<dbReference type="GO" id="GO:0007420">
    <property type="term" value="P:brain development"/>
    <property type="evidence" value="ECO:0000315"/>
    <property type="project" value="MGI"/>
</dbReference>
<dbReference type="GO" id="GO:0021795">
    <property type="term" value="P:cerebral cortex cell migration"/>
    <property type="evidence" value="ECO:0000315"/>
    <property type="project" value="MGI"/>
</dbReference>
<dbReference type="GO" id="GO:0021892">
    <property type="term" value="P:cerebral cortex GABAergic interneuron differentiation"/>
    <property type="evidence" value="ECO:0000315"/>
    <property type="project" value="MGI"/>
</dbReference>
<dbReference type="GO" id="GO:0021895">
    <property type="term" value="P:cerebral cortex neuron differentiation"/>
    <property type="evidence" value="ECO:0000315"/>
    <property type="project" value="MGI"/>
</dbReference>
<dbReference type="GO" id="GO:0060486">
    <property type="term" value="P:club cell differentiation"/>
    <property type="evidence" value="ECO:0000316"/>
    <property type="project" value="MGI"/>
</dbReference>
<dbReference type="GO" id="GO:0031128">
    <property type="term" value="P:developmental induction"/>
    <property type="evidence" value="ECO:0000315"/>
    <property type="project" value="MGI"/>
</dbReference>
<dbReference type="GO" id="GO:0007492">
    <property type="term" value="P:endoderm development"/>
    <property type="evidence" value="ECO:0000315"/>
    <property type="project" value="MGI"/>
</dbReference>
<dbReference type="GO" id="GO:0060441">
    <property type="term" value="P:epithelial tube branching involved in lung morphogenesis"/>
    <property type="evidence" value="ECO:0007669"/>
    <property type="project" value="Ensembl"/>
</dbReference>
<dbReference type="GO" id="GO:0021798">
    <property type="term" value="P:forebrain dorsal/ventral pattern formation"/>
    <property type="evidence" value="ECO:0000315"/>
    <property type="project" value="MGI"/>
</dbReference>
<dbReference type="GO" id="GO:0021879">
    <property type="term" value="P:forebrain neuron differentiation"/>
    <property type="evidence" value="ECO:0000315"/>
    <property type="project" value="MGI"/>
</dbReference>
<dbReference type="GO" id="GO:0021877">
    <property type="term" value="P:forebrain neuron fate commitment"/>
    <property type="evidence" value="ECO:0000315"/>
    <property type="project" value="MGI"/>
</dbReference>
<dbReference type="GO" id="GO:0097154">
    <property type="term" value="P:GABAergic neuron differentiation"/>
    <property type="evidence" value="ECO:0000315"/>
    <property type="project" value="MGI"/>
</dbReference>
<dbReference type="GO" id="GO:0010467">
    <property type="term" value="P:gene expression"/>
    <property type="evidence" value="ECO:0000315"/>
    <property type="project" value="MGI"/>
</dbReference>
<dbReference type="GO" id="GO:0021759">
    <property type="term" value="P:globus pallidus development"/>
    <property type="evidence" value="ECO:0000315"/>
    <property type="project" value="MGI"/>
</dbReference>
<dbReference type="GO" id="GO:0021766">
    <property type="term" value="P:hippocampus development"/>
    <property type="evidence" value="ECO:0000315"/>
    <property type="project" value="MGI"/>
</dbReference>
<dbReference type="GO" id="GO:0021854">
    <property type="term" value="P:hypothalamus development"/>
    <property type="evidence" value="ECO:0000315"/>
    <property type="project" value="MGI"/>
</dbReference>
<dbReference type="GO" id="GO:1904936">
    <property type="term" value="P:interneuron migration"/>
    <property type="evidence" value="ECO:0000315"/>
    <property type="project" value="MGI"/>
</dbReference>
<dbReference type="GO" id="GO:0033327">
    <property type="term" value="P:Leydig cell differentiation"/>
    <property type="evidence" value="ECO:0000315"/>
    <property type="project" value="MGI"/>
</dbReference>
<dbReference type="GO" id="GO:0007626">
    <property type="term" value="P:locomotory behavior"/>
    <property type="evidence" value="ECO:0000315"/>
    <property type="project" value="MGI"/>
</dbReference>
<dbReference type="GO" id="GO:0030324">
    <property type="term" value="P:lung development"/>
    <property type="evidence" value="ECO:0000315"/>
    <property type="project" value="MGI"/>
</dbReference>
<dbReference type="GO" id="GO:0060430">
    <property type="term" value="P:lung saccule development"/>
    <property type="evidence" value="ECO:0000316"/>
    <property type="project" value="MGI"/>
</dbReference>
<dbReference type="GO" id="GO:0030336">
    <property type="term" value="P:negative regulation of cell migration"/>
    <property type="evidence" value="ECO:0007669"/>
    <property type="project" value="Ensembl"/>
</dbReference>
<dbReference type="GO" id="GO:0045892">
    <property type="term" value="P:negative regulation of DNA-templated transcription"/>
    <property type="evidence" value="ECO:0000314"/>
    <property type="project" value="UniProtKB"/>
</dbReference>
<dbReference type="GO" id="GO:0010719">
    <property type="term" value="P:negative regulation of epithelial to mesenchymal transition"/>
    <property type="evidence" value="ECO:0007669"/>
    <property type="project" value="Ensembl"/>
</dbReference>
<dbReference type="GO" id="GO:0000122">
    <property type="term" value="P:negative regulation of transcription by RNA polymerase II"/>
    <property type="evidence" value="ECO:0000314"/>
    <property type="project" value="MGI"/>
</dbReference>
<dbReference type="GO" id="GO:0030512">
    <property type="term" value="P:negative regulation of transforming growth factor beta receptor signaling pathway"/>
    <property type="evidence" value="ECO:0007669"/>
    <property type="project" value="Ensembl"/>
</dbReference>
<dbReference type="GO" id="GO:0048663">
    <property type="term" value="P:neuron fate commitment"/>
    <property type="evidence" value="ECO:0000315"/>
    <property type="project" value="MGI"/>
</dbReference>
<dbReference type="GO" id="GO:0001764">
    <property type="term" value="P:neuron migration"/>
    <property type="evidence" value="ECO:0000315"/>
    <property type="project" value="MGI"/>
</dbReference>
<dbReference type="GO" id="GO:0048709">
    <property type="term" value="P:oligodendrocyte differentiation"/>
    <property type="evidence" value="ECO:0000316"/>
    <property type="project" value="MGI"/>
</dbReference>
<dbReference type="GO" id="GO:0007389">
    <property type="term" value="P:pattern specification process"/>
    <property type="evidence" value="ECO:0000316"/>
    <property type="project" value="MGI"/>
</dbReference>
<dbReference type="GO" id="GO:0006644">
    <property type="term" value="P:phospholipid metabolic process"/>
    <property type="evidence" value="ECO:0000316"/>
    <property type="project" value="MGI"/>
</dbReference>
<dbReference type="GO" id="GO:0021983">
    <property type="term" value="P:pituitary gland development"/>
    <property type="evidence" value="ECO:0000315"/>
    <property type="project" value="MGI"/>
</dbReference>
<dbReference type="GO" id="GO:0042753">
    <property type="term" value="P:positive regulation of circadian rhythm"/>
    <property type="evidence" value="ECO:0000315"/>
    <property type="project" value="UniProtKB"/>
</dbReference>
<dbReference type="GO" id="GO:0045893">
    <property type="term" value="P:positive regulation of DNA-templated transcription"/>
    <property type="evidence" value="ECO:0000314"/>
    <property type="project" value="UniProtKB"/>
</dbReference>
<dbReference type="GO" id="GO:0010628">
    <property type="term" value="P:positive regulation of gene expression"/>
    <property type="evidence" value="ECO:0007669"/>
    <property type="project" value="Ensembl"/>
</dbReference>
<dbReference type="GO" id="GO:0045944">
    <property type="term" value="P:positive regulation of transcription by RNA polymerase II"/>
    <property type="evidence" value="ECO:0000314"/>
    <property type="project" value="MGI"/>
</dbReference>
<dbReference type="GO" id="GO:0006355">
    <property type="term" value="P:regulation of DNA-templated transcription"/>
    <property type="evidence" value="ECO:0000314"/>
    <property type="project" value="MGI"/>
</dbReference>
<dbReference type="GO" id="GO:0006357">
    <property type="term" value="P:regulation of transcription by RNA polymerase II"/>
    <property type="evidence" value="ECO:0000314"/>
    <property type="project" value="MGI"/>
</dbReference>
<dbReference type="GO" id="GO:0009725">
    <property type="term" value="P:response to hormone"/>
    <property type="evidence" value="ECO:0007669"/>
    <property type="project" value="Ensembl"/>
</dbReference>
<dbReference type="GO" id="GO:0048511">
    <property type="term" value="P:rhythmic process"/>
    <property type="evidence" value="ECO:0007669"/>
    <property type="project" value="UniProtKB-KW"/>
</dbReference>
<dbReference type="GO" id="GO:0022029">
    <property type="term" value="P:telencephalon cell migration"/>
    <property type="evidence" value="ECO:0000315"/>
    <property type="project" value="MGI"/>
</dbReference>
<dbReference type="GO" id="GO:0021537">
    <property type="term" value="P:telencephalon development"/>
    <property type="evidence" value="ECO:0000315"/>
    <property type="project" value="MGI"/>
</dbReference>
<dbReference type="GO" id="GO:0030878">
    <property type="term" value="P:thyroid gland development"/>
    <property type="evidence" value="ECO:0000315"/>
    <property type="project" value="MGI"/>
</dbReference>
<dbReference type="GO" id="GO:0060510">
    <property type="term" value="P:type II pneumocyte differentiation"/>
    <property type="evidence" value="ECO:0000316"/>
    <property type="project" value="MGI"/>
</dbReference>
<dbReference type="CDD" id="cd00086">
    <property type="entry name" value="homeodomain"/>
    <property type="match status" value="1"/>
</dbReference>
<dbReference type="FunFam" id="1.10.10.60:FF:000108">
    <property type="entry name" value="NK2 homeobox 1"/>
    <property type="match status" value="1"/>
</dbReference>
<dbReference type="Gene3D" id="1.10.10.60">
    <property type="entry name" value="Homeodomain-like"/>
    <property type="match status" value="1"/>
</dbReference>
<dbReference type="InterPro" id="IPR001356">
    <property type="entry name" value="HD"/>
</dbReference>
<dbReference type="InterPro" id="IPR020479">
    <property type="entry name" value="HD_metazoa"/>
</dbReference>
<dbReference type="InterPro" id="IPR017970">
    <property type="entry name" value="Homeobox_CS"/>
</dbReference>
<dbReference type="InterPro" id="IPR050394">
    <property type="entry name" value="Homeobox_NK-like"/>
</dbReference>
<dbReference type="InterPro" id="IPR009057">
    <property type="entry name" value="Homeodomain-like_sf"/>
</dbReference>
<dbReference type="PANTHER" id="PTHR24340">
    <property type="entry name" value="HOMEOBOX PROTEIN NKX"/>
    <property type="match status" value="1"/>
</dbReference>
<dbReference type="PANTHER" id="PTHR24340:SF33">
    <property type="entry name" value="HOMEOBOX PROTEIN NKX-2.1"/>
    <property type="match status" value="1"/>
</dbReference>
<dbReference type="Pfam" id="PF00046">
    <property type="entry name" value="Homeodomain"/>
    <property type="match status" value="1"/>
</dbReference>
<dbReference type="PRINTS" id="PR00024">
    <property type="entry name" value="HOMEOBOX"/>
</dbReference>
<dbReference type="SMART" id="SM00389">
    <property type="entry name" value="HOX"/>
    <property type="match status" value="1"/>
</dbReference>
<dbReference type="SUPFAM" id="SSF46689">
    <property type="entry name" value="Homeodomain-like"/>
    <property type="match status" value="1"/>
</dbReference>
<dbReference type="PROSITE" id="PS00027">
    <property type="entry name" value="HOMEOBOX_1"/>
    <property type="match status" value="1"/>
</dbReference>
<dbReference type="PROSITE" id="PS50071">
    <property type="entry name" value="HOMEOBOX_2"/>
    <property type="match status" value="1"/>
</dbReference>
<feature type="chain" id="PRO_0000049344" description="Homeobox protein Nkx-2.1">
    <location>
        <begin position="1"/>
        <end position="372"/>
    </location>
</feature>
<feature type="DNA-binding region" description="Homeobox" evidence="4">
    <location>
        <begin position="161"/>
        <end position="220"/>
    </location>
</feature>
<feature type="region of interest" description="Disordered" evidence="5">
    <location>
        <begin position="219"/>
        <end position="258"/>
    </location>
</feature>
<feature type="region of interest" description="Disordered" evidence="5">
    <location>
        <begin position="269"/>
        <end position="288"/>
    </location>
</feature>
<feature type="region of interest" description="Disordered" evidence="5">
    <location>
        <begin position="312"/>
        <end position="340"/>
    </location>
</feature>
<feature type="compositionally biased region" description="Gly residues" evidence="5">
    <location>
        <begin position="233"/>
        <end position="244"/>
    </location>
</feature>
<feature type="compositionally biased region" description="Low complexity" evidence="5">
    <location>
        <begin position="245"/>
        <end position="254"/>
    </location>
</feature>
<feature type="compositionally biased region" description="Low complexity" evidence="5">
    <location>
        <begin position="273"/>
        <end position="288"/>
    </location>
</feature>
<feature type="modified residue" description="Phosphoserine" evidence="2">
    <location>
        <position position="255"/>
    </location>
</feature>
<gene>
    <name evidence="9" type="primary">Nkx2-1</name>
    <name type="synonym">Nkx-2.1</name>
    <name type="synonym">Titf1</name>
    <name type="synonym">Ttf1</name>
</gene>
<keyword id="KW-0010">Activator</keyword>
<keyword id="KW-0090">Biological rhythms</keyword>
<keyword id="KW-0238">DNA-binding</keyword>
<keyword id="KW-0371">Homeobox</keyword>
<keyword id="KW-0539">Nucleus</keyword>
<keyword id="KW-0597">Phosphoprotein</keyword>
<keyword id="KW-1185">Reference proteome</keyword>
<keyword id="KW-0678">Repressor</keyword>
<keyword id="KW-0804">Transcription</keyword>
<keyword id="KW-0805">Transcription regulation</keyword>
<sequence>MSMSPKHTTPFSVSDILSPLEESYKKVGMEGGGLGAPLAAYRQGQAAPPAAAMQQHAVGHHGAVTAAYHMTAAGVPQLSHSAVGGYCNGNLGNMSELPPYQDTMRNSASGPGWYGANPDPRFPAISRFMGPASGMNMSGMGGLGSLGDVSKNMAPLPSAPRRKRRVLFSQAQVYELERRFKQQKYLSAPEREHLASMIHLTPTQVKIWFQNHRYKMKRQAKDKAAQQQLQQDSGGGGGGGGGAGCPQQQQAQQQSPRRVAVPVLVKDGKPCQAGAPAPGAASLQSHAQQQAQQQAQAAQAAAAAISVGSGGAGLGAHPGHQPGSAGQSPDLAHHAASPAGLQGQVSSLSHLNSSGSDYGAMSCSTLLYGRTW</sequence>
<accession>P50220</accession>
<comment type="function">
    <text evidence="2 6 7">Transcription factor that binds and activates the promoter of thyroid specific genes such as thyroglobulin, thyroperoxidase, and thyrotropin receptor. Crucial in the maintenance of the thyroid differentiation phenotype. May play a role in lung development and surfactant homeostasis. Forms a regulatory loop with GRHL2 that coordinates lung epithelial cell morphogenesis and differentiation (PubMed:22955271). Activates the transcription of GNRHR and plays a role in enhancing the circadian oscillation of its gene expression. Represses the transcription of the circadian transcriptional repressor NR1D1 (PubMed:22356123).</text>
</comment>
<comment type="subunit">
    <text evidence="3">Interacts with WWTR1.</text>
</comment>
<comment type="subcellular location">
    <subcellularLocation>
        <location evidence="7">Nucleus</location>
    </subcellularLocation>
</comment>
<comment type="tissue specificity">
    <text>Thyroid, lung and brain.</text>
</comment>
<comment type="developmental stage">
    <text evidence="7">Expressed in lung at least from to 9.5 dpc to adulthood.</text>
</comment>
<comment type="PTM">
    <text evidence="1">Phosphorylated on serine residues by STK3/MST2.</text>
</comment>
<comment type="similarity">
    <text evidence="8">Belongs to the NK-2 homeobox family.</text>
</comment>
<protein>
    <recommendedName>
        <fullName>Homeobox protein Nkx-2.1</fullName>
    </recommendedName>
    <alternativeName>
        <fullName>Thyroid nuclear factor 1</fullName>
    </alternativeName>
    <alternativeName>
        <fullName>Thyroid transcription factor 1</fullName>
        <shortName>TTF-1</shortName>
    </alternativeName>
    <alternativeName>
        <fullName>Thyroid-specific enhancer-binding protein</fullName>
        <shortName>T/EBP</shortName>
    </alternativeName>
</protein>